<reference key="1">
    <citation type="submission" date="2009-03" db="EMBL/GenBank/DDBJ databases">
        <title>Brucella melitensis ATCC 23457 whole genome shotgun sequencing project.</title>
        <authorList>
            <person name="Setubal J.C."/>
            <person name="Boyle S."/>
            <person name="Crasta O.R."/>
            <person name="Gillespie J.J."/>
            <person name="Kenyon R.W."/>
            <person name="Lu J."/>
            <person name="Mane S."/>
            <person name="Nagrani S."/>
            <person name="Shallom J.M."/>
            <person name="Shallom S."/>
            <person name="Shukla M."/>
            <person name="Snyder E.E."/>
            <person name="Sobral B.W."/>
            <person name="Wattam A.R."/>
            <person name="Will R."/>
            <person name="Williams K."/>
            <person name="Yoo H."/>
            <person name="Munk C."/>
            <person name="Tapia R."/>
            <person name="Han C."/>
            <person name="Detter J.C."/>
            <person name="Bruce D."/>
            <person name="Brettin T.S."/>
        </authorList>
    </citation>
    <scope>NUCLEOTIDE SEQUENCE [LARGE SCALE GENOMIC DNA]</scope>
    <source>
        <strain>ATCC 23457</strain>
    </source>
</reference>
<gene>
    <name evidence="1" type="primary">kdsA</name>
    <name type="ordered locus">BMEA_A1178</name>
</gene>
<name>KDSA_BRUMB</name>
<feature type="chain" id="PRO_1000117771" description="2-dehydro-3-deoxyphosphooctonate aldolase">
    <location>
        <begin position="1"/>
        <end position="277"/>
    </location>
</feature>
<keyword id="KW-0963">Cytoplasm</keyword>
<keyword id="KW-0448">Lipopolysaccharide biosynthesis</keyword>
<keyword id="KW-0808">Transferase</keyword>
<comment type="catalytic activity">
    <reaction evidence="1">
        <text>D-arabinose 5-phosphate + phosphoenolpyruvate + H2O = 3-deoxy-alpha-D-manno-2-octulosonate-8-phosphate + phosphate</text>
        <dbReference type="Rhea" id="RHEA:14053"/>
        <dbReference type="ChEBI" id="CHEBI:15377"/>
        <dbReference type="ChEBI" id="CHEBI:43474"/>
        <dbReference type="ChEBI" id="CHEBI:57693"/>
        <dbReference type="ChEBI" id="CHEBI:58702"/>
        <dbReference type="ChEBI" id="CHEBI:85985"/>
        <dbReference type="EC" id="2.5.1.55"/>
    </reaction>
</comment>
<comment type="pathway">
    <text evidence="1">Carbohydrate biosynthesis; 3-deoxy-D-manno-octulosonate biosynthesis; 3-deoxy-D-manno-octulosonate from D-ribulose 5-phosphate: step 2/3.</text>
</comment>
<comment type="pathway">
    <text evidence="1">Bacterial outer membrane biogenesis; lipopolysaccharide biosynthesis.</text>
</comment>
<comment type="subcellular location">
    <subcellularLocation>
        <location evidence="1">Cytoplasm</location>
    </subcellularLocation>
</comment>
<comment type="similarity">
    <text evidence="1">Belongs to the KdsA family.</text>
</comment>
<accession>C0RJA4</accession>
<proteinExistence type="inferred from homology"/>
<sequence length="277" mass="29498">MVTANSTVKVGNVTFSNSAPLALIAGPCQMETRDHAFEMAGRLKEMTDKLGIGLVYKSSFDKANRTSLKAARGIGLEKALEVFSDLKKEYGFPVLTDIHTEEQCAAVAPVVDVLQIPAFLCRQTDLLIAAARTGRVVNVKKGQFLAPWDMKNVLAKITESGNPNVLATERGVSFGYNTLVSDMRALPIMAGLGAPVIFDATHSVQQPGGQGGSTGGQREFVETLARAAVAVGVAGLFIETHEDPDNAPSDGPNMVPIDKMPALLEKLMAFDRIAKAL</sequence>
<protein>
    <recommendedName>
        <fullName evidence="1">2-dehydro-3-deoxyphosphooctonate aldolase</fullName>
        <ecNumber evidence="1">2.5.1.55</ecNumber>
    </recommendedName>
    <alternativeName>
        <fullName evidence="1">3-deoxy-D-manno-octulosonic acid 8-phosphate synthase</fullName>
    </alternativeName>
    <alternativeName>
        <fullName evidence="1">KDO-8-phosphate synthase</fullName>
        <shortName evidence="1">KDO 8-P synthase</shortName>
        <shortName evidence="1">KDOPS</shortName>
    </alternativeName>
    <alternativeName>
        <fullName evidence="1">Phospho-2-dehydro-3-deoxyoctonate aldolase</fullName>
    </alternativeName>
</protein>
<dbReference type="EC" id="2.5.1.55" evidence="1"/>
<dbReference type="EMBL" id="CP001488">
    <property type="protein sequence ID" value="ACO00912.1"/>
    <property type="molecule type" value="Genomic_DNA"/>
</dbReference>
<dbReference type="RefSeq" id="WP_002964262.1">
    <property type="nucleotide sequence ID" value="NC_012441.1"/>
</dbReference>
<dbReference type="SMR" id="C0RJA4"/>
<dbReference type="GeneID" id="97533614"/>
<dbReference type="KEGG" id="bmi:BMEA_A1178"/>
<dbReference type="HOGENOM" id="CLU_036666_0_0_5"/>
<dbReference type="UniPathway" id="UPA00030"/>
<dbReference type="UniPathway" id="UPA00357">
    <property type="reaction ID" value="UER00474"/>
</dbReference>
<dbReference type="Proteomes" id="UP000001748">
    <property type="component" value="Chromosome I"/>
</dbReference>
<dbReference type="GO" id="GO:0005737">
    <property type="term" value="C:cytoplasm"/>
    <property type="evidence" value="ECO:0007669"/>
    <property type="project" value="UniProtKB-SubCell"/>
</dbReference>
<dbReference type="GO" id="GO:0008676">
    <property type="term" value="F:3-deoxy-8-phosphooctulonate synthase activity"/>
    <property type="evidence" value="ECO:0007669"/>
    <property type="project" value="UniProtKB-UniRule"/>
</dbReference>
<dbReference type="GO" id="GO:0019294">
    <property type="term" value="P:keto-3-deoxy-D-manno-octulosonic acid biosynthetic process"/>
    <property type="evidence" value="ECO:0007669"/>
    <property type="project" value="UniProtKB-UniRule"/>
</dbReference>
<dbReference type="Gene3D" id="3.20.20.70">
    <property type="entry name" value="Aldolase class I"/>
    <property type="match status" value="1"/>
</dbReference>
<dbReference type="HAMAP" id="MF_00056">
    <property type="entry name" value="KDO8P_synth"/>
    <property type="match status" value="1"/>
</dbReference>
<dbReference type="InterPro" id="IPR013785">
    <property type="entry name" value="Aldolase_TIM"/>
</dbReference>
<dbReference type="InterPro" id="IPR006218">
    <property type="entry name" value="DAHP1/KDSA"/>
</dbReference>
<dbReference type="InterPro" id="IPR006269">
    <property type="entry name" value="KDO8P_synthase"/>
</dbReference>
<dbReference type="NCBIfam" id="TIGR01362">
    <property type="entry name" value="KDO8P_synth"/>
    <property type="match status" value="1"/>
</dbReference>
<dbReference type="NCBIfam" id="NF003543">
    <property type="entry name" value="PRK05198.1"/>
    <property type="match status" value="1"/>
</dbReference>
<dbReference type="PANTHER" id="PTHR21057">
    <property type="entry name" value="PHOSPHO-2-DEHYDRO-3-DEOXYHEPTONATE ALDOLASE"/>
    <property type="match status" value="1"/>
</dbReference>
<dbReference type="Pfam" id="PF00793">
    <property type="entry name" value="DAHP_synth_1"/>
    <property type="match status" value="1"/>
</dbReference>
<dbReference type="SUPFAM" id="SSF51569">
    <property type="entry name" value="Aldolase"/>
    <property type="match status" value="1"/>
</dbReference>
<evidence type="ECO:0000255" key="1">
    <source>
        <dbReference type="HAMAP-Rule" id="MF_00056"/>
    </source>
</evidence>
<organism>
    <name type="scientific">Brucella melitensis biotype 2 (strain ATCC 23457)</name>
    <dbReference type="NCBI Taxonomy" id="546272"/>
    <lineage>
        <taxon>Bacteria</taxon>
        <taxon>Pseudomonadati</taxon>
        <taxon>Pseudomonadota</taxon>
        <taxon>Alphaproteobacteria</taxon>
        <taxon>Hyphomicrobiales</taxon>
        <taxon>Brucellaceae</taxon>
        <taxon>Brucella/Ochrobactrum group</taxon>
        <taxon>Brucella</taxon>
    </lineage>
</organism>